<keyword id="KW-0460">Magnesium</keyword>
<keyword id="KW-0479">Metal-binding</keyword>
<name>Y187_THEON</name>
<gene>
    <name type="ordered locus">TON_0187</name>
</gene>
<organism>
    <name type="scientific">Thermococcus onnurineus (strain NA1)</name>
    <dbReference type="NCBI Taxonomy" id="523850"/>
    <lineage>
        <taxon>Archaea</taxon>
        <taxon>Methanobacteriati</taxon>
        <taxon>Methanobacteriota</taxon>
        <taxon>Thermococci</taxon>
        <taxon>Thermococcales</taxon>
        <taxon>Thermococcaceae</taxon>
        <taxon>Thermococcus</taxon>
    </lineage>
</organism>
<reference key="1">
    <citation type="journal article" date="2008" name="J. Bacteriol.">
        <title>The complete genome sequence of Thermococcus onnurineus NA1 reveals a mixed heterotrophic and carboxydotrophic metabolism.</title>
        <authorList>
            <person name="Lee H.S."/>
            <person name="Kang S.G."/>
            <person name="Bae S.S."/>
            <person name="Lim J.K."/>
            <person name="Cho Y."/>
            <person name="Kim Y.J."/>
            <person name="Jeon J.H."/>
            <person name="Cha S.-S."/>
            <person name="Kwon K.K."/>
            <person name="Kim H.-T."/>
            <person name="Park C.-J."/>
            <person name="Lee H.-W."/>
            <person name="Kim S.I."/>
            <person name="Chun J."/>
            <person name="Colwell R.R."/>
            <person name="Kim S.-J."/>
            <person name="Lee J.-H."/>
        </authorList>
    </citation>
    <scope>NUCLEOTIDE SEQUENCE [LARGE SCALE GENOMIC DNA]</scope>
    <source>
        <strain>NA1</strain>
    </source>
</reference>
<sequence length="133" mass="15401">MYAENYKRFEELIDKLREFEGAIIVEGPRDEVALRNLGVRAEIIRLSRLPLSEIALIASSYGEVMILTDFDRKGEELARKLLRYLEGYPCRVDSETRKELKRIAKKDIKGIEDLYGLYLKVISVSDPHLEGIR</sequence>
<accession>B6YSY5</accession>
<protein>
    <recommendedName>
        <fullName evidence="1">UPF0292 protein TON_0187</fullName>
    </recommendedName>
</protein>
<dbReference type="EMBL" id="CP000855">
    <property type="protein sequence ID" value="ACJ15672.1"/>
    <property type="molecule type" value="Genomic_DNA"/>
</dbReference>
<dbReference type="RefSeq" id="WP_012571145.1">
    <property type="nucleotide sequence ID" value="NC_011529.1"/>
</dbReference>
<dbReference type="SMR" id="B6YSY5"/>
<dbReference type="STRING" id="523850.TON_0187"/>
<dbReference type="GeneID" id="7017844"/>
<dbReference type="KEGG" id="ton:TON_0187"/>
<dbReference type="PATRIC" id="fig|523850.10.peg.187"/>
<dbReference type="eggNOG" id="arCOG01486">
    <property type="taxonomic scope" value="Archaea"/>
</dbReference>
<dbReference type="HOGENOM" id="CLU_140789_3_0_2"/>
<dbReference type="OrthoDB" id="56459at2157"/>
<dbReference type="Proteomes" id="UP000002727">
    <property type="component" value="Chromosome"/>
</dbReference>
<dbReference type="GO" id="GO:0046872">
    <property type="term" value="F:metal ion binding"/>
    <property type="evidence" value="ECO:0007669"/>
    <property type="project" value="UniProtKB-KW"/>
</dbReference>
<dbReference type="CDD" id="cd01027">
    <property type="entry name" value="TOPRIM_RNase_M5_like"/>
    <property type="match status" value="1"/>
</dbReference>
<dbReference type="Gene3D" id="3.40.1360.10">
    <property type="match status" value="1"/>
</dbReference>
<dbReference type="HAMAP" id="MF_01095">
    <property type="entry name" value="UPF0292"/>
    <property type="match status" value="1"/>
</dbReference>
<dbReference type="InterPro" id="IPR006171">
    <property type="entry name" value="TOPRIM_dom"/>
</dbReference>
<dbReference type="InterPro" id="IPR034141">
    <property type="entry name" value="TOPRIM_RNase_M5-like"/>
</dbReference>
<dbReference type="InterPro" id="IPR022972">
    <property type="entry name" value="UPF0292"/>
</dbReference>
<dbReference type="NCBIfam" id="NF003090">
    <property type="entry name" value="PRK04017.1-1"/>
    <property type="match status" value="1"/>
</dbReference>
<dbReference type="PANTHER" id="PTHR39964:SF2">
    <property type="entry name" value="UPF0292 PROTEIN MJ1624"/>
    <property type="match status" value="1"/>
</dbReference>
<dbReference type="PANTHER" id="PTHR39964">
    <property type="entry name" value="UPF0292 PROTEIN TK1411"/>
    <property type="match status" value="1"/>
</dbReference>
<dbReference type="Pfam" id="PF01751">
    <property type="entry name" value="Toprim"/>
    <property type="match status" value="1"/>
</dbReference>
<dbReference type="SMART" id="SM00493">
    <property type="entry name" value="TOPRIM"/>
    <property type="match status" value="1"/>
</dbReference>
<dbReference type="SUPFAM" id="SSF110455">
    <property type="entry name" value="Toprim domain"/>
    <property type="match status" value="1"/>
</dbReference>
<dbReference type="PROSITE" id="PS50880">
    <property type="entry name" value="TOPRIM"/>
    <property type="match status" value="1"/>
</dbReference>
<comment type="cofactor">
    <cofactor evidence="1">
        <name>Mg(2+)</name>
        <dbReference type="ChEBI" id="CHEBI:18420"/>
    </cofactor>
    <text evidence="1">Binds two Mg(2+) per subunit.</text>
</comment>
<comment type="similarity">
    <text evidence="1">Belongs to the UPF0292 family.</text>
</comment>
<evidence type="ECO:0000255" key="1">
    <source>
        <dbReference type="HAMAP-Rule" id="MF_01095"/>
    </source>
</evidence>
<feature type="chain" id="PRO_1000136960" description="UPF0292 protein TON_0187">
    <location>
        <begin position="1"/>
        <end position="133"/>
    </location>
</feature>
<feature type="domain" description="Toprim" evidence="1">
    <location>
        <begin position="20"/>
        <end position="100"/>
    </location>
</feature>
<feature type="binding site" evidence="1">
    <location>
        <position position="26"/>
    </location>
    <ligand>
        <name>Mg(2+)</name>
        <dbReference type="ChEBI" id="CHEBI:18420"/>
        <label>1</label>
        <note>catalytic</note>
    </ligand>
</feature>
<feature type="binding site" evidence="1">
    <location>
        <position position="69"/>
    </location>
    <ligand>
        <name>Mg(2+)</name>
        <dbReference type="ChEBI" id="CHEBI:18420"/>
        <label>1</label>
        <note>catalytic</note>
    </ligand>
</feature>
<feature type="binding site" evidence="1">
    <location>
        <position position="69"/>
    </location>
    <ligand>
        <name>Mg(2+)</name>
        <dbReference type="ChEBI" id="CHEBI:18420"/>
        <label>2</label>
    </ligand>
</feature>
<feature type="binding site" evidence="1">
    <location>
        <position position="71"/>
    </location>
    <ligand>
        <name>Mg(2+)</name>
        <dbReference type="ChEBI" id="CHEBI:18420"/>
        <label>2</label>
    </ligand>
</feature>
<proteinExistence type="inferred from homology"/>